<comment type="function">
    <text evidence="1">One of the components of the core complex of photosystem II (PSII), required for its stability and/or assembly. PSII is a light-driven water:plastoquinone oxidoreductase that uses light energy to abstract electrons from H(2)O, generating O(2) and a proton gradient subsequently used for ATP formation. It consists of a core antenna complex that captures photons, and an electron transfer chain that converts photonic excitation into a charge separation.</text>
</comment>
<comment type="subunit">
    <text evidence="1">PSII is composed of 1 copy each of membrane proteins PsbA, PsbB, PsbC, PsbD, PsbE, PsbF, PsbH, PsbI, PsbJ, PsbK, PsbL, PsbM, PsbT, PsbX, PsbY, PsbZ, Psb30/Ycf12, at least 3 peripheral proteins of the oxygen-evolving complex and a large number of cofactors. It forms dimeric complexes.</text>
</comment>
<comment type="subcellular location">
    <subcellularLocation>
        <location evidence="1">Plastid</location>
        <location evidence="1">Chloroplast thylakoid membrane</location>
        <topology evidence="1">Single-pass membrane protein</topology>
    </subcellularLocation>
</comment>
<comment type="similarity">
    <text evidence="1">Belongs to the PsbI family.</text>
</comment>
<keyword id="KW-0150">Chloroplast</keyword>
<keyword id="KW-0472">Membrane</keyword>
<keyword id="KW-0602">Photosynthesis</keyword>
<keyword id="KW-0604">Photosystem II</keyword>
<keyword id="KW-0934">Plastid</keyword>
<keyword id="KW-0674">Reaction center</keyword>
<keyword id="KW-0793">Thylakoid</keyword>
<keyword id="KW-0812">Transmembrane</keyword>
<keyword id="KW-1133">Transmembrane helix</keyword>
<reference key="1">
    <citation type="journal article" date="1986" name="Nature">
        <title>Chloroplast gene organization deduced from complete sequence of liverwort Marchantia polymorpha chloroplast DNA.</title>
        <authorList>
            <person name="Ohyama K."/>
            <person name="Fukuzawa H."/>
            <person name="Kohchi T."/>
            <person name="Shirai H."/>
            <person name="Sano T."/>
            <person name="Sano S."/>
            <person name="Umesono K."/>
            <person name="Shiki Y."/>
            <person name="Takeuchi M."/>
            <person name="Chang Z."/>
            <person name="Aota S."/>
            <person name="Inokuchi H."/>
            <person name="Ozeki H."/>
        </authorList>
    </citation>
    <scope>NUCLEOTIDE SEQUENCE [LARGE SCALE GENOMIC DNA]</scope>
</reference>
<reference key="2">
    <citation type="journal article" date="1988" name="J. Mol. Biol.">
        <title>Structure and organization of Marchantia polymorpha chloroplast genome. II. Gene organization of the large single copy region from rps'12 to atpB.</title>
        <authorList>
            <person name="Umesono K."/>
            <person name="Inokuchi H."/>
            <person name="Shiki Y."/>
            <person name="Takeuchi M."/>
            <person name="Chang Z."/>
            <person name="Fukuzawa H."/>
            <person name="Kohchi T."/>
            <person name="Shirai H."/>
            <person name="Ohyama K."/>
            <person name="Ozeki H."/>
        </authorList>
    </citation>
    <scope>NUCLEOTIDE SEQUENCE [GENOMIC DNA]</scope>
</reference>
<organism>
    <name type="scientific">Marchantia polymorpha</name>
    <name type="common">Common liverwort</name>
    <name type="synonym">Marchantia aquatica</name>
    <dbReference type="NCBI Taxonomy" id="3197"/>
    <lineage>
        <taxon>Eukaryota</taxon>
        <taxon>Viridiplantae</taxon>
        <taxon>Streptophyta</taxon>
        <taxon>Embryophyta</taxon>
        <taxon>Marchantiophyta</taxon>
        <taxon>Marchantiopsida</taxon>
        <taxon>Marchantiidae</taxon>
        <taxon>Marchantiales</taxon>
        <taxon>Marchantiaceae</taxon>
        <taxon>Marchantia</taxon>
    </lineage>
</organism>
<name>PSBI_MARPO</name>
<dbReference type="EMBL" id="X04465">
    <property type="protein sequence ID" value="CAA28072.1"/>
    <property type="molecule type" value="Genomic_DNA"/>
</dbReference>
<dbReference type="PIR" id="A05019">
    <property type="entry name" value="A05019"/>
</dbReference>
<dbReference type="RefSeq" id="NP_039286.1">
    <property type="nucleotide sequence ID" value="NC_001319.1"/>
</dbReference>
<dbReference type="RefSeq" id="YP_009646803.1">
    <property type="nucleotide sequence ID" value="NC_042505.1"/>
</dbReference>
<dbReference type="SMR" id="P09969"/>
<dbReference type="GeneID" id="2702589"/>
<dbReference type="GeneID" id="40386763"/>
<dbReference type="GO" id="GO:0009535">
    <property type="term" value="C:chloroplast thylakoid membrane"/>
    <property type="evidence" value="ECO:0007669"/>
    <property type="project" value="UniProtKB-SubCell"/>
</dbReference>
<dbReference type="GO" id="GO:0009539">
    <property type="term" value="C:photosystem II reaction center"/>
    <property type="evidence" value="ECO:0007669"/>
    <property type="project" value="InterPro"/>
</dbReference>
<dbReference type="GO" id="GO:0015979">
    <property type="term" value="P:photosynthesis"/>
    <property type="evidence" value="ECO:0007669"/>
    <property type="project" value="UniProtKB-UniRule"/>
</dbReference>
<dbReference type="HAMAP" id="MF_01316">
    <property type="entry name" value="PSII_PsbI"/>
    <property type="match status" value="1"/>
</dbReference>
<dbReference type="InterPro" id="IPR003686">
    <property type="entry name" value="PSII_PsbI"/>
</dbReference>
<dbReference type="InterPro" id="IPR037271">
    <property type="entry name" value="PSII_PsbI_sf"/>
</dbReference>
<dbReference type="NCBIfam" id="NF002735">
    <property type="entry name" value="PRK02655.1"/>
    <property type="match status" value="1"/>
</dbReference>
<dbReference type="PANTHER" id="PTHR35772">
    <property type="entry name" value="PHOTOSYSTEM II REACTION CENTER PROTEIN I"/>
    <property type="match status" value="1"/>
</dbReference>
<dbReference type="PANTHER" id="PTHR35772:SF1">
    <property type="entry name" value="PHOTOSYSTEM II REACTION CENTER PROTEIN I"/>
    <property type="match status" value="1"/>
</dbReference>
<dbReference type="Pfam" id="PF02532">
    <property type="entry name" value="PsbI"/>
    <property type="match status" value="1"/>
</dbReference>
<dbReference type="SUPFAM" id="SSF161041">
    <property type="entry name" value="Photosystem II reaction center protein I, PsbI"/>
    <property type="match status" value="1"/>
</dbReference>
<proteinExistence type="inferred from homology"/>
<sequence length="36" mass="4153">MLTLKLFVYTVVIFFVSLFVFGFLSNDPGRNPGRKE</sequence>
<protein>
    <recommendedName>
        <fullName evidence="1">Photosystem II reaction center protein I</fullName>
        <shortName evidence="1">PSII-I</shortName>
    </recommendedName>
    <alternativeName>
        <fullName evidence="1">PSII 4.8 kDa protein</fullName>
    </alternativeName>
</protein>
<evidence type="ECO:0000255" key="1">
    <source>
        <dbReference type="HAMAP-Rule" id="MF_01316"/>
    </source>
</evidence>
<feature type="chain" id="PRO_0000219634" description="Photosystem II reaction center protein I">
    <location>
        <begin position="1"/>
        <end position="36"/>
    </location>
</feature>
<feature type="transmembrane region" description="Helical" evidence="1">
    <location>
        <begin position="4"/>
        <end position="24"/>
    </location>
</feature>
<gene>
    <name evidence="1" type="primary">psbI</name>
</gene>
<geneLocation type="chloroplast"/>
<accession>P09969</accession>